<proteinExistence type="inferred from homology"/>
<organismHost>
    <name type="scientific">Homo sapiens</name>
    <name type="common">Human</name>
    <dbReference type="NCBI Taxonomy" id="9606"/>
</organismHost>
<comment type="function">
    <text evidence="1">Contributes to multiple aspects of the viral life cycle including viral genome amplification, suppression of suprabasal cell differentiation and egress of newly formed virions. Induces host cell cycle arrest at the G2 phase by associating with and preventing the nuclear entry of host CDK1/cyclin B1 complexes. Inhibits cellular DNA replication by preventing loading of host replication licensing proteins MCM2 and MCM7 onto chromatin. Within the cytoplasm, associates with host kinase SRPK1, a splicing factor regulator, and inhibits its activity. Therefore, E4 favors expression of late viral transcripts by inhibiting SRPK1-mediated phosphorylation of host serine-arginine (SR) proteins that have critical roles in mRNA metabolism. Late in the infectious cycle, E4 also acts to diminish the integrity of the keratinocyte by disrupting the keratin cytoskeleton and inducing apoptosis through alteration of mitochondrial function to facilitate egress of the newly formed virions.</text>
</comment>
<comment type="subunit">
    <text evidence="1">Assembles into oligomeric complexes. Interacts with host CDK1. Interacts with host SRPK1; this interaction may favor expression of late viral transcripts. Interacts with host cytokeratin components KRT8 and KRT18.</text>
</comment>
<comment type="subcellular location">
    <subcellularLocation>
        <location evidence="1">Host cytoplasm</location>
    </subcellularLocation>
    <subcellularLocation>
        <location evidence="1">Host nucleus</location>
    </subcellularLocation>
</comment>
<comment type="PTM">
    <text evidence="1">Phosphorylated by host ERK. The phosphorylation triggers a structural change that enhances keratin binding and protein stability.</text>
</comment>
<comment type="miscellaneous">
    <text evidence="1">The major E4 form is first synthesized as an E1^E4 fusion protein from spliced E1^E4 transcripts, such that the first few amino acids of the E4 protein are derived from the N terminus of E1.</text>
</comment>
<comment type="similarity">
    <text evidence="2">Belongs to the papillomaviridae E4 protein family.</text>
</comment>
<accession>Q02265</accession>
<keyword id="KW-0244">Early protein</keyword>
<keyword id="KW-1035">Host cytoplasm</keyword>
<keyword id="KW-1079">Host G2/M cell cycle arrest by virus</keyword>
<keyword id="KW-1048">Host nucleus</keyword>
<keyword id="KW-0945">Host-virus interaction</keyword>
<keyword id="KW-1121">Modulation of host cell cycle by virus</keyword>
<keyword id="KW-0597">Phosphoprotein</keyword>
<feature type="chain" id="PRO_0000133264" description="Protein E4">
    <location>
        <begin position="1"/>
        <end position="100"/>
    </location>
</feature>
<organism>
    <name type="scientific">Human papillomavirus 13</name>
    <dbReference type="NCBI Taxonomy" id="10573"/>
    <lineage>
        <taxon>Viruses</taxon>
        <taxon>Monodnaviria</taxon>
        <taxon>Shotokuvirae</taxon>
        <taxon>Cossaviricota</taxon>
        <taxon>Papovaviricetes</taxon>
        <taxon>Zurhausenvirales</taxon>
        <taxon>Papillomaviridae</taxon>
        <taxon>Firstpapillomavirinae</taxon>
        <taxon>Alphapapillomavirus</taxon>
        <taxon>Alphapapillomavirus 10</taxon>
    </lineage>
</organism>
<protein>
    <recommendedName>
        <fullName>Protein E4</fullName>
    </recommendedName>
</protein>
<gene>
    <name type="primary">E4</name>
</gene>
<evidence type="ECO:0000250" key="1">
    <source>
        <dbReference type="UniProtKB" id="P06922"/>
    </source>
</evidence>
<evidence type="ECO:0000305" key="2"/>
<sequence length="100" mass="11140">MAEDTVLYKKYPLLGLLHTPPPPPHRPPPQCPAAPRKNVCKRRLVNDNEDLHVPLETPRTHKALCVSQTTTPWTVQTTTSTLTITTITKDGTTVTVQLHL</sequence>
<name>VE4_HPV13</name>
<dbReference type="EMBL" id="X62843">
    <property type="protein sequence ID" value="CAA44651.1"/>
    <property type="molecule type" value="Genomic_DNA"/>
</dbReference>
<dbReference type="PIR" id="E42955">
    <property type="entry name" value="W4WL13"/>
</dbReference>
<dbReference type="Proteomes" id="UP000009107">
    <property type="component" value="Genome"/>
</dbReference>
<dbReference type="GO" id="GO:0030430">
    <property type="term" value="C:host cell cytoplasm"/>
    <property type="evidence" value="ECO:0007669"/>
    <property type="project" value="UniProtKB-SubCell"/>
</dbReference>
<dbReference type="GO" id="GO:0042025">
    <property type="term" value="C:host cell nucleus"/>
    <property type="evidence" value="ECO:0007669"/>
    <property type="project" value="UniProtKB-SubCell"/>
</dbReference>
<dbReference type="GO" id="GO:0039592">
    <property type="term" value="P:symbiont-mediated arrest of host cell cycle during G2/M transition"/>
    <property type="evidence" value="ECO:0007669"/>
    <property type="project" value="UniProtKB-KW"/>
</dbReference>
<dbReference type="InterPro" id="IPR003861">
    <property type="entry name" value="Papilloma_E4"/>
</dbReference>
<dbReference type="Pfam" id="PF02711">
    <property type="entry name" value="Pap_E4"/>
    <property type="match status" value="1"/>
</dbReference>
<reference key="1">
    <citation type="journal article" date="1992" name="Virology">
        <title>Human papillomavirus type 13 and pygmy chimpanzee papillomavirus type 1: comparison of the genome organizations.</title>
        <authorList>
            <person name="van Ranst M."/>
            <person name="Fuse A."/>
            <person name="Fiten P."/>
            <person name="Beuken E."/>
            <person name="Pfister H."/>
            <person name="Burk R.D."/>
            <person name="Opdenakker G."/>
        </authorList>
    </citation>
    <scope>NUCLEOTIDE SEQUENCE [GENOMIC DNA]</scope>
</reference>